<proteinExistence type="inferred from homology"/>
<name>RL23_HYPNA</name>
<feature type="chain" id="PRO_0000272760" description="Large ribosomal subunit protein uL23">
    <location>
        <begin position="1"/>
        <end position="99"/>
    </location>
</feature>
<gene>
    <name evidence="1" type="primary">rplW</name>
    <name type="ordered locus">HNE_2849</name>
</gene>
<dbReference type="EMBL" id="CP000158">
    <property type="protein sequence ID" value="ABI77395.1"/>
    <property type="molecule type" value="Genomic_DNA"/>
</dbReference>
<dbReference type="RefSeq" id="WP_011647824.1">
    <property type="nucleotide sequence ID" value="NC_008358.1"/>
</dbReference>
<dbReference type="SMR" id="Q0BYB6"/>
<dbReference type="STRING" id="228405.HNE_2849"/>
<dbReference type="KEGG" id="hne:HNE_2849"/>
<dbReference type="eggNOG" id="COG0089">
    <property type="taxonomic scope" value="Bacteria"/>
</dbReference>
<dbReference type="HOGENOM" id="CLU_037562_3_1_5"/>
<dbReference type="Proteomes" id="UP000001959">
    <property type="component" value="Chromosome"/>
</dbReference>
<dbReference type="GO" id="GO:1990904">
    <property type="term" value="C:ribonucleoprotein complex"/>
    <property type="evidence" value="ECO:0007669"/>
    <property type="project" value="UniProtKB-KW"/>
</dbReference>
<dbReference type="GO" id="GO:0005840">
    <property type="term" value="C:ribosome"/>
    <property type="evidence" value="ECO:0007669"/>
    <property type="project" value="UniProtKB-KW"/>
</dbReference>
<dbReference type="GO" id="GO:0019843">
    <property type="term" value="F:rRNA binding"/>
    <property type="evidence" value="ECO:0007669"/>
    <property type="project" value="UniProtKB-UniRule"/>
</dbReference>
<dbReference type="GO" id="GO:0003735">
    <property type="term" value="F:structural constituent of ribosome"/>
    <property type="evidence" value="ECO:0007669"/>
    <property type="project" value="InterPro"/>
</dbReference>
<dbReference type="GO" id="GO:0006412">
    <property type="term" value="P:translation"/>
    <property type="evidence" value="ECO:0007669"/>
    <property type="project" value="UniProtKB-UniRule"/>
</dbReference>
<dbReference type="FunFam" id="3.30.70.330:FF:000001">
    <property type="entry name" value="50S ribosomal protein L23"/>
    <property type="match status" value="1"/>
</dbReference>
<dbReference type="Gene3D" id="3.30.70.330">
    <property type="match status" value="1"/>
</dbReference>
<dbReference type="HAMAP" id="MF_01369_B">
    <property type="entry name" value="Ribosomal_uL23_B"/>
    <property type="match status" value="1"/>
</dbReference>
<dbReference type="InterPro" id="IPR012677">
    <property type="entry name" value="Nucleotide-bd_a/b_plait_sf"/>
</dbReference>
<dbReference type="InterPro" id="IPR013025">
    <property type="entry name" value="Ribosomal_uL23-like"/>
</dbReference>
<dbReference type="InterPro" id="IPR012678">
    <property type="entry name" value="Ribosomal_uL23/eL15/eS24_sf"/>
</dbReference>
<dbReference type="NCBIfam" id="NF004359">
    <property type="entry name" value="PRK05738.1-3"/>
    <property type="match status" value="1"/>
</dbReference>
<dbReference type="NCBIfam" id="NF004360">
    <property type="entry name" value="PRK05738.1-5"/>
    <property type="match status" value="1"/>
</dbReference>
<dbReference type="NCBIfam" id="NF004363">
    <property type="entry name" value="PRK05738.2-4"/>
    <property type="match status" value="1"/>
</dbReference>
<dbReference type="PANTHER" id="PTHR11620">
    <property type="entry name" value="60S RIBOSOMAL PROTEIN L23A"/>
    <property type="match status" value="1"/>
</dbReference>
<dbReference type="Pfam" id="PF00276">
    <property type="entry name" value="Ribosomal_L23"/>
    <property type="match status" value="1"/>
</dbReference>
<dbReference type="SUPFAM" id="SSF54189">
    <property type="entry name" value="Ribosomal proteins S24e, L23 and L15e"/>
    <property type="match status" value="1"/>
</dbReference>
<accession>Q0BYB6</accession>
<reference key="1">
    <citation type="journal article" date="2006" name="J. Bacteriol.">
        <title>Comparative genomic evidence for a close relationship between the dimorphic prosthecate bacteria Hyphomonas neptunium and Caulobacter crescentus.</title>
        <authorList>
            <person name="Badger J.H."/>
            <person name="Hoover T.R."/>
            <person name="Brun Y.V."/>
            <person name="Weiner R.M."/>
            <person name="Laub M.T."/>
            <person name="Alexandre G."/>
            <person name="Mrazek J."/>
            <person name="Ren Q."/>
            <person name="Paulsen I.T."/>
            <person name="Nelson K.E."/>
            <person name="Khouri H.M."/>
            <person name="Radune D."/>
            <person name="Sosa J."/>
            <person name="Dodson R.J."/>
            <person name="Sullivan S.A."/>
            <person name="Rosovitz M.J."/>
            <person name="Madupu R."/>
            <person name="Brinkac L.M."/>
            <person name="Durkin A.S."/>
            <person name="Daugherty S.C."/>
            <person name="Kothari S.P."/>
            <person name="Giglio M.G."/>
            <person name="Zhou L."/>
            <person name="Haft D.H."/>
            <person name="Selengut J.D."/>
            <person name="Davidsen T.M."/>
            <person name="Yang Q."/>
            <person name="Zafar N."/>
            <person name="Ward N.L."/>
        </authorList>
    </citation>
    <scope>NUCLEOTIDE SEQUENCE [LARGE SCALE GENOMIC DNA]</scope>
    <source>
        <strain>ATCC 15444</strain>
    </source>
</reference>
<evidence type="ECO:0000255" key="1">
    <source>
        <dbReference type="HAMAP-Rule" id="MF_01369"/>
    </source>
</evidence>
<evidence type="ECO:0000305" key="2"/>
<comment type="function">
    <text evidence="1">One of the early assembly proteins it binds 23S rRNA. One of the proteins that surrounds the polypeptide exit tunnel on the outside of the ribosome. Forms the main docking site for trigger factor binding to the ribosome.</text>
</comment>
<comment type="subunit">
    <text evidence="1">Part of the 50S ribosomal subunit. Contacts protein L29, and trigger factor when it is bound to the ribosome.</text>
</comment>
<comment type="similarity">
    <text evidence="1">Belongs to the universal ribosomal protein uL23 family.</text>
</comment>
<keyword id="KW-1185">Reference proteome</keyword>
<keyword id="KW-0687">Ribonucleoprotein</keyword>
<keyword id="KW-0689">Ribosomal protein</keyword>
<keyword id="KW-0694">RNA-binding</keyword>
<keyword id="KW-0699">rRNA-binding</keyword>
<protein>
    <recommendedName>
        <fullName evidence="1">Large ribosomal subunit protein uL23</fullName>
    </recommendedName>
    <alternativeName>
        <fullName evidence="2">50S ribosomal protein L23</fullName>
    </alternativeName>
</protein>
<sequence length="99" mass="11050">MAEVKPHHYDVIRRPLITEKSTLVAEQNKIIFEVAPDADKKAIKEAVEVLFKVSVTKVNTLTQKGKTKRFRGFEGRRSDVKKAIVTLAEGQSVDISTGL</sequence>
<organism>
    <name type="scientific">Hyphomonas neptunium (strain ATCC 15444)</name>
    <dbReference type="NCBI Taxonomy" id="228405"/>
    <lineage>
        <taxon>Bacteria</taxon>
        <taxon>Pseudomonadati</taxon>
        <taxon>Pseudomonadota</taxon>
        <taxon>Alphaproteobacteria</taxon>
        <taxon>Hyphomonadales</taxon>
        <taxon>Hyphomonadaceae</taxon>
        <taxon>Hyphomonas</taxon>
    </lineage>
</organism>